<sequence>MTTTDPVQLTADLVRCPSVTPTEGGALVLLERLLTDAGFSCTRVDRGEVCNLFARWGDKAHARTFGFNGHTDVVPIGDEAAWTHDPFGAEIVEGVMYGRGTTDMKSGVAAFAAAAIDFVQDTPPDGAVVLTITGDEEGDAVDGTTALLDYMDAAGEKMSVCLVGEPTCPNHMGEMIKIGRRGSMTAWFTVTGVQGHSAYPHRANNPMNGLARLMDRLGSHQLDEGSEHFDASTLAIVTIDTGNPATNVIPAQGRAAVNIRFNDLHSGASLTDWLQGEADKVAKEFGLEVDMKVQISGESFITPPGDLSDLVSRAVQTETNQAPELSTTGGTSDARFVKSHCPVVEFGLVGKTMHQVDENVDVAHIHQLKSIYSRILKDYFS</sequence>
<evidence type="ECO:0000255" key="1">
    <source>
        <dbReference type="HAMAP-Rule" id="MF_01690"/>
    </source>
</evidence>
<accession>Q1GC88</accession>
<protein>
    <recommendedName>
        <fullName evidence="1">Succinyl-diaminopimelate desuccinylase 1</fullName>
        <shortName evidence="1">SDAP desuccinylase 1</shortName>
        <ecNumber evidence="1">3.5.1.18</ecNumber>
    </recommendedName>
    <alternativeName>
        <fullName evidence="1">N-succinyl-LL-2,6-diaminoheptanedioate amidohydrolase 1</fullName>
    </alternativeName>
</protein>
<name>DAPE1_RUEST</name>
<reference key="1">
    <citation type="submission" date="2006-05" db="EMBL/GenBank/DDBJ databases">
        <title>Complete sequence of chromosome of Silicibacter sp. TM1040.</title>
        <authorList>
            <consortium name="US DOE Joint Genome Institute"/>
            <person name="Copeland A."/>
            <person name="Lucas S."/>
            <person name="Lapidus A."/>
            <person name="Barry K."/>
            <person name="Detter J.C."/>
            <person name="Glavina del Rio T."/>
            <person name="Hammon N."/>
            <person name="Israni S."/>
            <person name="Dalin E."/>
            <person name="Tice H."/>
            <person name="Pitluck S."/>
            <person name="Brettin T."/>
            <person name="Bruce D."/>
            <person name="Han C."/>
            <person name="Tapia R."/>
            <person name="Goodwin L."/>
            <person name="Thompson L.S."/>
            <person name="Gilna P."/>
            <person name="Schmutz J."/>
            <person name="Larimer F."/>
            <person name="Land M."/>
            <person name="Hauser L."/>
            <person name="Kyrpides N."/>
            <person name="Kim E."/>
            <person name="Belas R."/>
            <person name="Moran M.A."/>
            <person name="Buchan A."/>
            <person name="Gonzalez J.M."/>
            <person name="Schell M.A."/>
            <person name="Sun F."/>
            <person name="Richardson P."/>
        </authorList>
    </citation>
    <scope>NUCLEOTIDE SEQUENCE [LARGE SCALE GENOMIC DNA]</scope>
    <source>
        <strain>TM1040</strain>
    </source>
</reference>
<dbReference type="EC" id="3.5.1.18" evidence="1"/>
<dbReference type="EMBL" id="CP000377">
    <property type="protein sequence ID" value="ABF65728.1"/>
    <property type="molecule type" value="Genomic_DNA"/>
</dbReference>
<dbReference type="RefSeq" id="WP_011540306.1">
    <property type="nucleotide sequence ID" value="NC_008044.1"/>
</dbReference>
<dbReference type="SMR" id="Q1GC88"/>
<dbReference type="STRING" id="292414.TM1040_2996"/>
<dbReference type="KEGG" id="sit:TM1040_2996"/>
<dbReference type="eggNOG" id="COG0624">
    <property type="taxonomic scope" value="Bacteria"/>
</dbReference>
<dbReference type="HOGENOM" id="CLU_021802_4_0_5"/>
<dbReference type="OrthoDB" id="9809784at2"/>
<dbReference type="UniPathway" id="UPA00034">
    <property type="reaction ID" value="UER00021"/>
</dbReference>
<dbReference type="Proteomes" id="UP000000636">
    <property type="component" value="Chromosome"/>
</dbReference>
<dbReference type="GO" id="GO:0008777">
    <property type="term" value="F:acetylornithine deacetylase activity"/>
    <property type="evidence" value="ECO:0007669"/>
    <property type="project" value="TreeGrafter"/>
</dbReference>
<dbReference type="GO" id="GO:0050897">
    <property type="term" value="F:cobalt ion binding"/>
    <property type="evidence" value="ECO:0007669"/>
    <property type="project" value="UniProtKB-UniRule"/>
</dbReference>
<dbReference type="GO" id="GO:0009014">
    <property type="term" value="F:succinyl-diaminopimelate desuccinylase activity"/>
    <property type="evidence" value="ECO:0007669"/>
    <property type="project" value="UniProtKB-UniRule"/>
</dbReference>
<dbReference type="GO" id="GO:0008270">
    <property type="term" value="F:zinc ion binding"/>
    <property type="evidence" value="ECO:0007669"/>
    <property type="project" value="UniProtKB-UniRule"/>
</dbReference>
<dbReference type="GO" id="GO:0019877">
    <property type="term" value="P:diaminopimelate biosynthetic process"/>
    <property type="evidence" value="ECO:0007669"/>
    <property type="project" value="UniProtKB-UniRule"/>
</dbReference>
<dbReference type="GO" id="GO:0006526">
    <property type="term" value="P:L-arginine biosynthetic process"/>
    <property type="evidence" value="ECO:0007669"/>
    <property type="project" value="TreeGrafter"/>
</dbReference>
<dbReference type="GO" id="GO:0009089">
    <property type="term" value="P:lysine biosynthetic process via diaminopimelate"/>
    <property type="evidence" value="ECO:0007669"/>
    <property type="project" value="UniProtKB-UniRule"/>
</dbReference>
<dbReference type="CDD" id="cd03891">
    <property type="entry name" value="M20_DapE_proteobac"/>
    <property type="match status" value="1"/>
</dbReference>
<dbReference type="Gene3D" id="3.40.630.10">
    <property type="entry name" value="Zn peptidases"/>
    <property type="match status" value="2"/>
</dbReference>
<dbReference type="HAMAP" id="MF_01690">
    <property type="entry name" value="DapE"/>
    <property type="match status" value="1"/>
</dbReference>
<dbReference type="InterPro" id="IPR001261">
    <property type="entry name" value="ArgE/DapE_CS"/>
</dbReference>
<dbReference type="InterPro" id="IPR036264">
    <property type="entry name" value="Bact_exopeptidase_dim_dom"/>
</dbReference>
<dbReference type="InterPro" id="IPR005941">
    <property type="entry name" value="DapE_proteobac"/>
</dbReference>
<dbReference type="InterPro" id="IPR002933">
    <property type="entry name" value="Peptidase_M20"/>
</dbReference>
<dbReference type="InterPro" id="IPR011650">
    <property type="entry name" value="Peptidase_M20_dimer"/>
</dbReference>
<dbReference type="InterPro" id="IPR050072">
    <property type="entry name" value="Peptidase_M20A"/>
</dbReference>
<dbReference type="NCBIfam" id="TIGR01246">
    <property type="entry name" value="dapE_proteo"/>
    <property type="match status" value="1"/>
</dbReference>
<dbReference type="NCBIfam" id="NF009557">
    <property type="entry name" value="PRK13009.1"/>
    <property type="match status" value="1"/>
</dbReference>
<dbReference type="PANTHER" id="PTHR43808">
    <property type="entry name" value="ACETYLORNITHINE DEACETYLASE"/>
    <property type="match status" value="1"/>
</dbReference>
<dbReference type="PANTHER" id="PTHR43808:SF31">
    <property type="entry name" value="N-ACETYL-L-CITRULLINE DEACETYLASE"/>
    <property type="match status" value="1"/>
</dbReference>
<dbReference type="Pfam" id="PF07687">
    <property type="entry name" value="M20_dimer"/>
    <property type="match status" value="1"/>
</dbReference>
<dbReference type="Pfam" id="PF01546">
    <property type="entry name" value="Peptidase_M20"/>
    <property type="match status" value="1"/>
</dbReference>
<dbReference type="SUPFAM" id="SSF55031">
    <property type="entry name" value="Bacterial exopeptidase dimerisation domain"/>
    <property type="match status" value="1"/>
</dbReference>
<dbReference type="SUPFAM" id="SSF53187">
    <property type="entry name" value="Zn-dependent exopeptidases"/>
    <property type="match status" value="1"/>
</dbReference>
<dbReference type="PROSITE" id="PS00759">
    <property type="entry name" value="ARGE_DAPE_CPG2_2"/>
    <property type="match status" value="1"/>
</dbReference>
<proteinExistence type="inferred from homology"/>
<feature type="chain" id="PRO_0000375751" description="Succinyl-diaminopimelate desuccinylase 1">
    <location>
        <begin position="1"/>
        <end position="381"/>
    </location>
</feature>
<feature type="active site" evidence="1">
    <location>
        <position position="72"/>
    </location>
</feature>
<feature type="active site" description="Proton acceptor" evidence="1">
    <location>
        <position position="136"/>
    </location>
</feature>
<feature type="binding site" evidence="1">
    <location>
        <position position="70"/>
    </location>
    <ligand>
        <name>Zn(2+)</name>
        <dbReference type="ChEBI" id="CHEBI:29105"/>
        <label>1</label>
    </ligand>
</feature>
<feature type="binding site" evidence="1">
    <location>
        <position position="103"/>
    </location>
    <ligand>
        <name>Zn(2+)</name>
        <dbReference type="ChEBI" id="CHEBI:29105"/>
        <label>1</label>
    </ligand>
</feature>
<feature type="binding site" evidence="1">
    <location>
        <position position="103"/>
    </location>
    <ligand>
        <name>Zn(2+)</name>
        <dbReference type="ChEBI" id="CHEBI:29105"/>
        <label>2</label>
    </ligand>
</feature>
<feature type="binding site" evidence="1">
    <location>
        <position position="137"/>
    </location>
    <ligand>
        <name>Zn(2+)</name>
        <dbReference type="ChEBI" id="CHEBI:29105"/>
        <label>2</label>
    </ligand>
</feature>
<feature type="binding site" evidence="1">
    <location>
        <position position="165"/>
    </location>
    <ligand>
        <name>Zn(2+)</name>
        <dbReference type="ChEBI" id="CHEBI:29105"/>
        <label>1</label>
    </ligand>
</feature>
<feature type="binding site" evidence="1">
    <location>
        <position position="354"/>
    </location>
    <ligand>
        <name>Zn(2+)</name>
        <dbReference type="ChEBI" id="CHEBI:29105"/>
        <label>2</label>
    </ligand>
</feature>
<comment type="function">
    <text evidence="1">Catalyzes the hydrolysis of N-succinyl-L,L-diaminopimelic acid (SDAP), forming succinate and LL-2,6-diaminopimelate (DAP), an intermediate involved in the bacterial biosynthesis of lysine and meso-diaminopimelic acid, an essential component of bacterial cell walls.</text>
</comment>
<comment type="catalytic activity">
    <reaction evidence="1">
        <text>N-succinyl-(2S,6S)-2,6-diaminopimelate + H2O = (2S,6S)-2,6-diaminopimelate + succinate</text>
        <dbReference type="Rhea" id="RHEA:22608"/>
        <dbReference type="ChEBI" id="CHEBI:15377"/>
        <dbReference type="ChEBI" id="CHEBI:30031"/>
        <dbReference type="ChEBI" id="CHEBI:57609"/>
        <dbReference type="ChEBI" id="CHEBI:58087"/>
        <dbReference type="EC" id="3.5.1.18"/>
    </reaction>
</comment>
<comment type="cofactor">
    <cofactor evidence="1">
        <name>Zn(2+)</name>
        <dbReference type="ChEBI" id="CHEBI:29105"/>
    </cofactor>
    <cofactor evidence="1">
        <name>Co(2+)</name>
        <dbReference type="ChEBI" id="CHEBI:48828"/>
    </cofactor>
    <text evidence="1">Binds 2 Zn(2+) or Co(2+) ions per subunit.</text>
</comment>
<comment type="pathway">
    <text evidence="1">Amino-acid biosynthesis; L-lysine biosynthesis via DAP pathway; LL-2,6-diaminopimelate from (S)-tetrahydrodipicolinate (succinylase route): step 3/3.</text>
</comment>
<comment type="subunit">
    <text evidence="1">Homodimer.</text>
</comment>
<comment type="similarity">
    <text evidence="1">Belongs to the peptidase M20A family. DapE subfamily.</text>
</comment>
<organism>
    <name type="scientific">Ruegeria sp. (strain TM1040)</name>
    <name type="common">Silicibacter sp.</name>
    <dbReference type="NCBI Taxonomy" id="292414"/>
    <lineage>
        <taxon>Bacteria</taxon>
        <taxon>Pseudomonadati</taxon>
        <taxon>Pseudomonadota</taxon>
        <taxon>Alphaproteobacteria</taxon>
        <taxon>Rhodobacterales</taxon>
        <taxon>Roseobacteraceae</taxon>
        <taxon>Ruegeria</taxon>
    </lineage>
</organism>
<gene>
    <name evidence="1" type="primary">dapE1</name>
    <name type="ordered locus">TM1040_2996</name>
</gene>
<keyword id="KW-0028">Amino-acid biosynthesis</keyword>
<keyword id="KW-0170">Cobalt</keyword>
<keyword id="KW-0220">Diaminopimelate biosynthesis</keyword>
<keyword id="KW-0378">Hydrolase</keyword>
<keyword id="KW-0457">Lysine biosynthesis</keyword>
<keyword id="KW-0479">Metal-binding</keyword>
<keyword id="KW-1185">Reference proteome</keyword>
<keyword id="KW-0862">Zinc</keyword>